<protein>
    <recommendedName>
        <fullName>Mitochondrial DnaJ homolog 2</fullName>
    </recommendedName>
</protein>
<organism>
    <name type="scientific">Saccharomyces cerevisiae (strain ATCC 204508 / S288c)</name>
    <name type="common">Baker's yeast</name>
    <dbReference type="NCBI Taxonomy" id="559292"/>
    <lineage>
        <taxon>Eukaryota</taxon>
        <taxon>Fungi</taxon>
        <taxon>Dikarya</taxon>
        <taxon>Ascomycota</taxon>
        <taxon>Saccharomycotina</taxon>
        <taxon>Saccharomycetes</taxon>
        <taxon>Saccharomycetales</taxon>
        <taxon>Saccharomycetaceae</taxon>
        <taxon>Saccharomyces</taxon>
    </lineage>
</organism>
<reference key="1">
    <citation type="journal article" date="1995" name="Yeast">
        <title>Sequencing analysis of a 15.4 kb fragment of yeast chromosome XIV identifies the RPD3, PAS8 and KRE1 loci, five new open reading frames.</title>
        <authorList>
            <person name="Maftahi M."/>
            <person name="Nicaud J.-M."/>
            <person name="Levesque H."/>
            <person name="Gaillardin C."/>
        </authorList>
    </citation>
    <scope>NUCLEOTIDE SEQUENCE [GENOMIC DNA]</scope>
    <source>
        <strain>S288c / FY1676</strain>
    </source>
</reference>
<reference key="2">
    <citation type="journal article" date="1997" name="Nature">
        <title>The nucleotide sequence of Saccharomyces cerevisiae chromosome XIV and its evolutionary implications.</title>
        <authorList>
            <person name="Philippsen P."/>
            <person name="Kleine K."/>
            <person name="Poehlmann R."/>
            <person name="Duesterhoeft A."/>
            <person name="Hamberg K."/>
            <person name="Hegemann J.H."/>
            <person name="Obermaier B."/>
            <person name="Urrestarazu L.A."/>
            <person name="Aert R."/>
            <person name="Albermann K."/>
            <person name="Altmann R."/>
            <person name="Andre B."/>
            <person name="Baladron V."/>
            <person name="Ballesta J.P.G."/>
            <person name="Becam A.-M."/>
            <person name="Beinhauer J.D."/>
            <person name="Boskovic J."/>
            <person name="Buitrago M.J."/>
            <person name="Bussereau F."/>
            <person name="Coster F."/>
            <person name="Crouzet M."/>
            <person name="D'Angelo M."/>
            <person name="Dal Pero F."/>
            <person name="De Antoni A."/>
            <person name="del Rey F."/>
            <person name="Doignon F."/>
            <person name="Domdey H."/>
            <person name="Dubois E."/>
            <person name="Fiedler T.A."/>
            <person name="Fleig U."/>
            <person name="Floeth M."/>
            <person name="Fritz C."/>
            <person name="Gaillardin C."/>
            <person name="Garcia-Cantalejo J.M."/>
            <person name="Glansdorff N."/>
            <person name="Goffeau A."/>
            <person name="Gueldener U."/>
            <person name="Herbert C.J."/>
            <person name="Heumann K."/>
            <person name="Heuss-Neitzel D."/>
            <person name="Hilbert H."/>
            <person name="Hinni K."/>
            <person name="Iraqui Houssaini I."/>
            <person name="Jacquet M."/>
            <person name="Jimenez A."/>
            <person name="Jonniaux J.-L."/>
            <person name="Karpfinger-Hartl L."/>
            <person name="Lanfranchi G."/>
            <person name="Lepingle A."/>
            <person name="Levesque H."/>
            <person name="Lyck R."/>
            <person name="Maftahi M."/>
            <person name="Mallet L."/>
            <person name="Maurer C.T.C."/>
            <person name="Messenguy F."/>
            <person name="Mewes H.-W."/>
            <person name="Moestl D."/>
            <person name="Nasr F."/>
            <person name="Nicaud J.-M."/>
            <person name="Niedenthal R.K."/>
            <person name="Pandolfo D."/>
            <person name="Pierard A."/>
            <person name="Piravandi E."/>
            <person name="Planta R.J."/>
            <person name="Pohl T.M."/>
            <person name="Purnelle B."/>
            <person name="Rebischung C."/>
            <person name="Remacha M.A."/>
            <person name="Revuelta J.L."/>
            <person name="Rinke M."/>
            <person name="Saiz J.E."/>
            <person name="Sartorello F."/>
            <person name="Scherens B."/>
            <person name="Sen-Gupta M."/>
            <person name="Soler-Mira A."/>
            <person name="Urbanus J.H.M."/>
            <person name="Valle G."/>
            <person name="Van Dyck L."/>
            <person name="Verhasselt P."/>
            <person name="Vierendeels F."/>
            <person name="Vissers S."/>
            <person name="Voet M."/>
            <person name="Volckaert G."/>
            <person name="Wach A."/>
            <person name="Wambutt R."/>
            <person name="Wedler H."/>
            <person name="Zollner A."/>
            <person name="Hani J."/>
        </authorList>
    </citation>
    <scope>NUCLEOTIDE SEQUENCE [LARGE SCALE GENOMIC DNA]</scope>
    <source>
        <strain>ATCC 204508 / S288c</strain>
    </source>
</reference>
<reference key="3">
    <citation type="journal article" date="2014" name="G3 (Bethesda)">
        <title>The reference genome sequence of Saccharomyces cerevisiae: Then and now.</title>
        <authorList>
            <person name="Engel S.R."/>
            <person name="Dietrich F.S."/>
            <person name="Fisk D.G."/>
            <person name="Binkley G."/>
            <person name="Balakrishnan R."/>
            <person name="Costanzo M.C."/>
            <person name="Dwight S.S."/>
            <person name="Hitz B.C."/>
            <person name="Karra K."/>
            <person name="Nash R.S."/>
            <person name="Weng S."/>
            <person name="Wong E.D."/>
            <person name="Lloyd P."/>
            <person name="Skrzypek M.S."/>
            <person name="Miyasato S.R."/>
            <person name="Simison M."/>
            <person name="Cherry J.M."/>
        </authorList>
    </citation>
    <scope>GENOME REANNOTATION</scope>
    <source>
        <strain>ATCC 204508 / S288c</strain>
    </source>
</reference>
<reference key="4">
    <citation type="journal article" date="2007" name="Genome Res.">
        <title>Approaching a complete repository of sequence-verified protein-encoding clones for Saccharomyces cerevisiae.</title>
        <authorList>
            <person name="Hu Y."/>
            <person name="Rolfs A."/>
            <person name="Bhullar B."/>
            <person name="Murthy T.V.S."/>
            <person name="Zhu C."/>
            <person name="Berger M.F."/>
            <person name="Camargo A.A."/>
            <person name="Kelley F."/>
            <person name="McCarron S."/>
            <person name="Jepson D."/>
            <person name="Richardson A."/>
            <person name="Raphael J."/>
            <person name="Moreira D."/>
            <person name="Taycher E."/>
            <person name="Zuo D."/>
            <person name="Mohr S."/>
            <person name="Kane M.F."/>
            <person name="Williamson J."/>
            <person name="Simpson A.J.G."/>
            <person name="Bulyk M.L."/>
            <person name="Harlow E."/>
            <person name="Marsischky G."/>
            <person name="Kolodner R.D."/>
            <person name="LaBaer J."/>
        </authorList>
    </citation>
    <scope>NUCLEOTIDE SEQUENCE [GENOMIC DNA]</scope>
    <source>
        <strain>ATCC 204508 / S288c</strain>
    </source>
</reference>
<reference key="5">
    <citation type="journal article" date="1997" name="J. Mol. Biol.">
        <title>Mdj2p, a novel DnaJ homolog in the mitochondrial inner membrane of the yeast Saccharomyces cerevisiae.</title>
        <authorList>
            <person name="Westermann B."/>
            <person name="Neupert W."/>
        </authorList>
    </citation>
    <scope>FUNCTION</scope>
    <scope>SUBCELLULAR LOCATION</scope>
</reference>
<reference key="6">
    <citation type="journal article" date="2003" name="Nature">
        <title>Global analysis of protein localization in budding yeast.</title>
        <authorList>
            <person name="Huh W.-K."/>
            <person name="Falvo J.V."/>
            <person name="Gerke L.C."/>
            <person name="Carroll A.S."/>
            <person name="Howson R.W."/>
            <person name="Weissman J.S."/>
            <person name="O'Shea E.K."/>
        </authorList>
    </citation>
    <scope>SUBCELLULAR LOCATION [LARGE SCALE ANALYSIS]</scope>
</reference>
<reference key="7">
    <citation type="journal article" date="2003" name="Nature">
        <title>Global analysis of protein expression in yeast.</title>
        <authorList>
            <person name="Ghaemmaghami S."/>
            <person name="Huh W.-K."/>
            <person name="Bower K."/>
            <person name="Howson R.W."/>
            <person name="Belle A."/>
            <person name="Dephoure N."/>
            <person name="O'Shea E.K."/>
            <person name="Weissman J.S."/>
        </authorList>
    </citation>
    <scope>LEVEL OF PROTEIN EXPRESSION [LARGE SCALE ANALYSIS]</scope>
</reference>
<reference key="8">
    <citation type="journal article" date="2005" name="J. Biol. Chem.">
        <title>The import motor of the yeast mitochondrial TIM23 preprotein translocase contains two different J proteins, Tim14 and Mdj2.</title>
        <authorList>
            <person name="Mokranjac D."/>
            <person name="Sichting M."/>
            <person name="Popov-Celeketic D."/>
            <person name="Berg A."/>
            <person name="Hell K."/>
            <person name="Neupert W."/>
        </authorList>
    </citation>
    <scope>FUNCTION</scope>
    <scope>IDENTIFICATION IN THE PAM23 COMPLEX</scope>
    <scope>INTERACTION WITH PAM16</scope>
</reference>
<sequence>MVLPIIIGLGVTMVALSVKSGLNAWTVYKTLSPLTIAKLNNIRIENPTAGYRDALKFKSSLIDEELKNRLNQYQGGFAPRMTEPEALLILDISAREINHLDEKLLKKKHRKAMVRNHPDRGGSPYMAAKINEAKEVLERSVLLRKR</sequence>
<feature type="chain" id="PRO_0000071094" description="Mitochondrial DnaJ homolog 2">
    <location>
        <begin position="1"/>
        <end position="146"/>
    </location>
</feature>
<feature type="domain" description="J" evidence="1">
    <location>
        <begin position="85"/>
        <end position="146"/>
    </location>
</feature>
<gene>
    <name type="primary">MDJ2</name>
    <name type="ordered locus">YNL328C</name>
    <name type="ORF">N0315</name>
</gene>
<comment type="function">
    <text evidence="4 5">Plays a role in mitochondrial biogenesis and protein folding. Participates in the translocation of transit peptide-containing proteins from the inner membrane into the mitochondrial matrix in an ATP-dependent manner, probably by stimulating activity of mtHSP70 (SSC1).</text>
</comment>
<comment type="subunit">
    <text evidence="4">Interacts with PAM16/TIM16 and is recruited by the PAM complex.</text>
</comment>
<comment type="subcellular location">
    <subcellularLocation>
        <location evidence="2 5">Mitochondrion inner membrane</location>
    </subcellularLocation>
</comment>
<comment type="miscellaneous">
    <text evidence="3">Present with 573 molecules/cell in log phase SD medium.</text>
</comment>
<keyword id="KW-0143">Chaperone</keyword>
<keyword id="KW-0472">Membrane</keyword>
<keyword id="KW-0496">Mitochondrion</keyword>
<keyword id="KW-0999">Mitochondrion inner membrane</keyword>
<keyword id="KW-0653">Protein transport</keyword>
<keyword id="KW-1185">Reference proteome</keyword>
<keyword id="KW-0346">Stress response</keyword>
<keyword id="KW-0811">Translocation</keyword>
<keyword id="KW-0813">Transport</keyword>
<accession>P42834</accession>
<accession>D6W0L9</accession>
<evidence type="ECO:0000255" key="1">
    <source>
        <dbReference type="PROSITE-ProRule" id="PRU00286"/>
    </source>
</evidence>
<evidence type="ECO:0000269" key="2">
    <source>
    </source>
</evidence>
<evidence type="ECO:0000269" key="3">
    <source>
    </source>
</evidence>
<evidence type="ECO:0000269" key="4">
    <source>
    </source>
</evidence>
<evidence type="ECO:0000269" key="5">
    <source>
    </source>
</evidence>
<proteinExistence type="evidence at protein level"/>
<name>MDJ2_YEAST</name>
<dbReference type="EMBL" id="Z46259">
    <property type="protein sequence ID" value="CAA86370.1"/>
    <property type="molecule type" value="Genomic_DNA"/>
</dbReference>
<dbReference type="EMBL" id="Z71604">
    <property type="protein sequence ID" value="CAA96260.1"/>
    <property type="molecule type" value="Genomic_DNA"/>
</dbReference>
<dbReference type="EMBL" id="AY692768">
    <property type="protein sequence ID" value="AAT92787.1"/>
    <property type="molecule type" value="Genomic_DNA"/>
</dbReference>
<dbReference type="EMBL" id="BK006947">
    <property type="protein sequence ID" value="DAA10235.1"/>
    <property type="molecule type" value="Genomic_DNA"/>
</dbReference>
<dbReference type="PIR" id="S55861">
    <property type="entry name" value="S55861"/>
</dbReference>
<dbReference type="RefSeq" id="NP_014071.1">
    <property type="nucleotide sequence ID" value="NM_001183166.1"/>
</dbReference>
<dbReference type="SMR" id="P42834"/>
<dbReference type="BioGRID" id="35513">
    <property type="interactions" value="28"/>
</dbReference>
<dbReference type="DIP" id="DIP-4690N"/>
<dbReference type="FunCoup" id="P42834">
    <property type="interactions" value="109"/>
</dbReference>
<dbReference type="STRING" id="4932.YNL328C"/>
<dbReference type="MoonDB" id="P42834">
    <property type="type" value="Predicted"/>
</dbReference>
<dbReference type="TCDB" id="3.A.8.1.1">
    <property type="family name" value="the mitochondrial protein translocase (mpt) family"/>
</dbReference>
<dbReference type="PaxDb" id="4932-YNL328C"/>
<dbReference type="PeptideAtlas" id="P42834"/>
<dbReference type="EnsemblFungi" id="YNL328C_mRNA">
    <property type="protein sequence ID" value="YNL328C"/>
    <property type="gene ID" value="YNL328C"/>
</dbReference>
<dbReference type="GeneID" id="855388"/>
<dbReference type="KEGG" id="sce:YNL328C"/>
<dbReference type="AGR" id="SGD:S000005272"/>
<dbReference type="SGD" id="S000005272">
    <property type="gene designation" value="MDJ2"/>
</dbReference>
<dbReference type="VEuPathDB" id="FungiDB:YNL328C"/>
<dbReference type="eggNOG" id="KOG0723">
    <property type="taxonomic scope" value="Eukaryota"/>
</dbReference>
<dbReference type="HOGENOM" id="CLU_017633_13_4_1"/>
<dbReference type="InParanoid" id="P42834"/>
<dbReference type="OMA" id="KLMVMNH"/>
<dbReference type="OrthoDB" id="240298at2759"/>
<dbReference type="BioCyc" id="YEAST:G3O-33312-MONOMER"/>
<dbReference type="BioGRID-ORCS" id="855388">
    <property type="hits" value="0 hits in 10 CRISPR screens"/>
</dbReference>
<dbReference type="PRO" id="PR:P42834"/>
<dbReference type="Proteomes" id="UP000002311">
    <property type="component" value="Chromosome XIV"/>
</dbReference>
<dbReference type="RNAct" id="P42834">
    <property type="molecule type" value="protein"/>
</dbReference>
<dbReference type="GO" id="GO:0005743">
    <property type="term" value="C:mitochondrial inner membrane"/>
    <property type="evidence" value="ECO:0000314"/>
    <property type="project" value="SGD"/>
</dbReference>
<dbReference type="GO" id="GO:0001405">
    <property type="term" value="C:PAM complex, Tim23 associated import motor"/>
    <property type="evidence" value="ECO:0000353"/>
    <property type="project" value="SGD"/>
</dbReference>
<dbReference type="GO" id="GO:0001671">
    <property type="term" value="F:ATPase activator activity"/>
    <property type="evidence" value="ECO:0000314"/>
    <property type="project" value="SGD"/>
</dbReference>
<dbReference type="GO" id="GO:0030150">
    <property type="term" value="P:protein import into mitochondrial matrix"/>
    <property type="evidence" value="ECO:0000316"/>
    <property type="project" value="SGD"/>
</dbReference>
<dbReference type="CDD" id="cd06257">
    <property type="entry name" value="DnaJ"/>
    <property type="match status" value="1"/>
</dbReference>
<dbReference type="FunFam" id="1.10.287.110:FF:000001">
    <property type="entry name" value="Import inner membrane translocase subunit tim14"/>
    <property type="match status" value="1"/>
</dbReference>
<dbReference type="Gene3D" id="1.10.287.110">
    <property type="entry name" value="DnaJ domain"/>
    <property type="match status" value="1"/>
</dbReference>
<dbReference type="InterPro" id="IPR001623">
    <property type="entry name" value="DnaJ_domain"/>
</dbReference>
<dbReference type="InterPro" id="IPR036869">
    <property type="entry name" value="J_dom_sf"/>
</dbReference>
<dbReference type="PANTHER" id="PTHR12763">
    <property type="match status" value="1"/>
</dbReference>
<dbReference type="PANTHER" id="PTHR12763:SF29">
    <property type="entry name" value="MITOCHONDRIAL DNAJ HOMOLOG 2"/>
    <property type="match status" value="1"/>
</dbReference>
<dbReference type="SMART" id="SM00271">
    <property type="entry name" value="DnaJ"/>
    <property type="match status" value="1"/>
</dbReference>
<dbReference type="SUPFAM" id="SSF46565">
    <property type="entry name" value="Chaperone J-domain"/>
    <property type="match status" value="1"/>
</dbReference>
<dbReference type="PROSITE" id="PS50076">
    <property type="entry name" value="DNAJ_2"/>
    <property type="match status" value="1"/>
</dbReference>